<name>PHOT2_ORYSJ</name>
<dbReference type="EC" id="2.7.11.1"/>
<dbReference type="EMBL" id="AB018443">
    <property type="protein sequence ID" value="BAA84779.1"/>
    <property type="molecule type" value="mRNA"/>
</dbReference>
<dbReference type="EMBL" id="AL731609">
    <property type="protein sequence ID" value="CAD40495.2"/>
    <property type="molecule type" value="Genomic_DNA"/>
</dbReference>
<dbReference type="EMBL" id="AP008210">
    <property type="protein sequence ID" value="BAF14329.1"/>
    <property type="status" value="ALT_SEQ"/>
    <property type="molecule type" value="Genomic_DNA"/>
</dbReference>
<dbReference type="EMBL" id="AP014960">
    <property type="status" value="NOT_ANNOTATED_CDS"/>
    <property type="molecule type" value="Genomic_DNA"/>
</dbReference>
<dbReference type="RefSeq" id="XP_015636457.1">
    <property type="nucleotide sequence ID" value="XM_015780971.1"/>
</dbReference>
<dbReference type="RefSeq" id="XP_015636458.1">
    <property type="nucleotide sequence ID" value="XM_015780972.1"/>
</dbReference>
<dbReference type="RefSeq" id="XP_015636459.1">
    <property type="nucleotide sequence ID" value="XM_015780973.1"/>
</dbReference>
<dbReference type="RefSeq" id="XP_015636460.1">
    <property type="nucleotide sequence ID" value="XM_015780974.1"/>
</dbReference>
<dbReference type="SMR" id="Q9ST27"/>
<dbReference type="FunCoup" id="Q9ST27">
    <property type="interactions" value="902"/>
</dbReference>
<dbReference type="STRING" id="39947.Q9ST27"/>
<dbReference type="PaxDb" id="39947-Q9ST27"/>
<dbReference type="EnsemblPlants" id="Os04t0304200-02">
    <property type="protein sequence ID" value="Os04t0304200-02"/>
    <property type="gene ID" value="Os04g0304200"/>
</dbReference>
<dbReference type="Gramene" id="Os04t0304200-02">
    <property type="protein sequence ID" value="Os04t0304200-02"/>
    <property type="gene ID" value="Os04g0304200"/>
</dbReference>
<dbReference type="KEGG" id="dosa:Os04g0304200"/>
<dbReference type="eggNOG" id="ENOG502QPPH">
    <property type="taxonomic scope" value="Eukaryota"/>
</dbReference>
<dbReference type="HOGENOM" id="CLU_006321_3_2_1"/>
<dbReference type="InParanoid" id="Q9ST27"/>
<dbReference type="OrthoDB" id="432483at2759"/>
<dbReference type="Proteomes" id="UP000000763">
    <property type="component" value="Chromosome 4"/>
</dbReference>
<dbReference type="Proteomes" id="UP000059680">
    <property type="component" value="Chromosome 4"/>
</dbReference>
<dbReference type="GO" id="GO:0005737">
    <property type="term" value="C:cytoplasm"/>
    <property type="evidence" value="ECO:0000318"/>
    <property type="project" value="GO_Central"/>
</dbReference>
<dbReference type="GO" id="GO:0005794">
    <property type="term" value="C:Golgi apparatus"/>
    <property type="evidence" value="ECO:0007669"/>
    <property type="project" value="EnsemblPlants"/>
</dbReference>
<dbReference type="GO" id="GO:0005634">
    <property type="term" value="C:nucleus"/>
    <property type="evidence" value="ECO:0000318"/>
    <property type="project" value="GO_Central"/>
</dbReference>
<dbReference type="GO" id="GO:0005886">
    <property type="term" value="C:plasma membrane"/>
    <property type="evidence" value="ECO:0000318"/>
    <property type="project" value="GO_Central"/>
</dbReference>
<dbReference type="GO" id="GO:0005524">
    <property type="term" value="F:ATP binding"/>
    <property type="evidence" value="ECO:0007669"/>
    <property type="project" value="UniProtKB-KW"/>
</dbReference>
<dbReference type="GO" id="GO:0009882">
    <property type="term" value="F:blue light photoreceptor activity"/>
    <property type="evidence" value="ECO:0000314"/>
    <property type="project" value="UniProtKB"/>
</dbReference>
<dbReference type="GO" id="GO:0010181">
    <property type="term" value="F:FMN binding"/>
    <property type="evidence" value="ECO:0007669"/>
    <property type="project" value="EnsemblPlants"/>
</dbReference>
<dbReference type="GO" id="GO:0042802">
    <property type="term" value="F:identical protein binding"/>
    <property type="evidence" value="ECO:0007669"/>
    <property type="project" value="EnsemblPlants"/>
</dbReference>
<dbReference type="GO" id="GO:0106310">
    <property type="term" value="F:protein serine kinase activity"/>
    <property type="evidence" value="ECO:0007669"/>
    <property type="project" value="RHEA"/>
</dbReference>
<dbReference type="GO" id="GO:0004674">
    <property type="term" value="F:protein serine/threonine kinase activity"/>
    <property type="evidence" value="ECO:0000318"/>
    <property type="project" value="GO_Central"/>
</dbReference>
<dbReference type="GO" id="GO:0007623">
    <property type="term" value="P:circadian rhythm"/>
    <property type="evidence" value="ECO:0007669"/>
    <property type="project" value="EnsemblPlants"/>
</dbReference>
<dbReference type="GO" id="GO:0009638">
    <property type="term" value="P:phototropism"/>
    <property type="evidence" value="ECO:0007669"/>
    <property type="project" value="EnsemblPlants"/>
</dbReference>
<dbReference type="GO" id="GO:0010118">
    <property type="term" value="P:stomatal movement"/>
    <property type="evidence" value="ECO:0007669"/>
    <property type="project" value="EnsemblPlants"/>
</dbReference>
<dbReference type="CDD" id="cd00130">
    <property type="entry name" value="PAS"/>
    <property type="match status" value="2"/>
</dbReference>
<dbReference type="CDD" id="cd05574">
    <property type="entry name" value="STKc_phototropin_like"/>
    <property type="match status" value="1"/>
</dbReference>
<dbReference type="FunFam" id="3.30.200.20:FF:000133">
    <property type="entry name" value="LOV domain-containing protein"/>
    <property type="match status" value="1"/>
</dbReference>
<dbReference type="FunFam" id="3.30.450.20:FF:000002">
    <property type="entry name" value="LOV domain-containing protein"/>
    <property type="match status" value="1"/>
</dbReference>
<dbReference type="FunFam" id="1.10.510.10:FF:000265">
    <property type="entry name" value="Putative LOV domain-containing protein"/>
    <property type="match status" value="1"/>
</dbReference>
<dbReference type="FunFam" id="3.30.450.20:FF:000036">
    <property type="entry name" value="Putative LOV domain-containing protein"/>
    <property type="match status" value="1"/>
</dbReference>
<dbReference type="Gene3D" id="3.30.450.20">
    <property type="entry name" value="PAS domain"/>
    <property type="match status" value="2"/>
</dbReference>
<dbReference type="Gene3D" id="3.30.200.20">
    <property type="entry name" value="Phosphorylase Kinase, domain 1"/>
    <property type="match status" value="1"/>
</dbReference>
<dbReference type="Gene3D" id="1.10.510.10">
    <property type="entry name" value="Transferase(Phosphotransferase) domain 1"/>
    <property type="match status" value="1"/>
</dbReference>
<dbReference type="InterPro" id="IPR011009">
    <property type="entry name" value="Kinase-like_dom_sf"/>
</dbReference>
<dbReference type="InterPro" id="IPR001610">
    <property type="entry name" value="PAC"/>
</dbReference>
<dbReference type="InterPro" id="IPR000014">
    <property type="entry name" value="PAS"/>
</dbReference>
<dbReference type="InterPro" id="IPR000700">
    <property type="entry name" value="PAS-assoc_C"/>
</dbReference>
<dbReference type="InterPro" id="IPR035965">
    <property type="entry name" value="PAS-like_dom_sf"/>
</dbReference>
<dbReference type="InterPro" id="IPR000719">
    <property type="entry name" value="Prot_kinase_dom"/>
</dbReference>
<dbReference type="InterPro" id="IPR017441">
    <property type="entry name" value="Protein_kinase_ATP_BS"/>
</dbReference>
<dbReference type="InterPro" id="IPR008271">
    <property type="entry name" value="Ser/Thr_kinase_AS"/>
</dbReference>
<dbReference type="NCBIfam" id="TIGR00229">
    <property type="entry name" value="sensory_box"/>
    <property type="match status" value="2"/>
</dbReference>
<dbReference type="PANTHER" id="PTHR45637">
    <property type="entry name" value="FLIPPASE KINASE 1-RELATED"/>
    <property type="match status" value="1"/>
</dbReference>
<dbReference type="Pfam" id="PF13426">
    <property type="entry name" value="PAS_9"/>
    <property type="match status" value="2"/>
</dbReference>
<dbReference type="Pfam" id="PF00069">
    <property type="entry name" value="Pkinase"/>
    <property type="match status" value="1"/>
</dbReference>
<dbReference type="SMART" id="SM00086">
    <property type="entry name" value="PAC"/>
    <property type="match status" value="2"/>
</dbReference>
<dbReference type="SMART" id="SM00091">
    <property type="entry name" value="PAS"/>
    <property type="match status" value="2"/>
</dbReference>
<dbReference type="SMART" id="SM00220">
    <property type="entry name" value="S_TKc"/>
    <property type="match status" value="1"/>
</dbReference>
<dbReference type="SUPFAM" id="SSF56112">
    <property type="entry name" value="Protein kinase-like (PK-like)"/>
    <property type="match status" value="1"/>
</dbReference>
<dbReference type="SUPFAM" id="SSF55785">
    <property type="entry name" value="PYP-like sensor domain (PAS domain)"/>
    <property type="match status" value="2"/>
</dbReference>
<dbReference type="PROSITE" id="PS50113">
    <property type="entry name" value="PAC"/>
    <property type="match status" value="2"/>
</dbReference>
<dbReference type="PROSITE" id="PS50112">
    <property type="entry name" value="PAS"/>
    <property type="match status" value="2"/>
</dbReference>
<dbReference type="PROSITE" id="PS00107">
    <property type="entry name" value="PROTEIN_KINASE_ATP"/>
    <property type="match status" value="1"/>
</dbReference>
<dbReference type="PROSITE" id="PS50011">
    <property type="entry name" value="PROTEIN_KINASE_DOM"/>
    <property type="match status" value="1"/>
</dbReference>
<dbReference type="PROSITE" id="PS00108">
    <property type="entry name" value="PROTEIN_KINASE_ST"/>
    <property type="match status" value="1"/>
</dbReference>
<keyword id="KW-0067">ATP-binding</keyword>
<keyword id="KW-0157">Chromophore</keyword>
<keyword id="KW-0285">Flavoprotein</keyword>
<keyword id="KW-0288">FMN</keyword>
<keyword id="KW-0418">Kinase</keyword>
<keyword id="KW-0547">Nucleotide-binding</keyword>
<keyword id="KW-0600">Photoreceptor protein</keyword>
<keyword id="KW-0675">Receptor</keyword>
<keyword id="KW-1185">Reference proteome</keyword>
<keyword id="KW-0677">Repeat</keyword>
<keyword id="KW-0716">Sensory transduction</keyword>
<keyword id="KW-0723">Serine/threonine-protein kinase</keyword>
<keyword id="KW-0808">Transferase</keyword>
<protein>
    <recommendedName>
        <fullName>Phototropin-2</fullName>
        <ecNumber>2.7.11.1</ecNumber>
    </recommendedName>
    <alternativeName>
        <fullName>Non-phototropic hypocotyl protein 1B</fullName>
        <shortName>OsNPH1B</shortName>
    </alternativeName>
</protein>
<organism>
    <name type="scientific">Oryza sativa subsp. japonica</name>
    <name type="common">Rice</name>
    <dbReference type="NCBI Taxonomy" id="39947"/>
    <lineage>
        <taxon>Eukaryota</taxon>
        <taxon>Viridiplantae</taxon>
        <taxon>Streptophyta</taxon>
        <taxon>Embryophyta</taxon>
        <taxon>Tracheophyta</taxon>
        <taxon>Spermatophyta</taxon>
        <taxon>Magnoliopsida</taxon>
        <taxon>Liliopsida</taxon>
        <taxon>Poales</taxon>
        <taxon>Poaceae</taxon>
        <taxon>BOP clade</taxon>
        <taxon>Oryzoideae</taxon>
        <taxon>Oryzeae</taxon>
        <taxon>Oryzinae</taxon>
        <taxon>Oryza</taxon>
        <taxon>Oryza sativa</taxon>
    </lineage>
</organism>
<feature type="chain" id="PRO_0000395004" description="Phototropin-2">
    <location>
        <begin position="1"/>
        <end position="907"/>
    </location>
</feature>
<feature type="domain" description="PAS 1" evidence="2">
    <location>
        <begin position="89"/>
        <end position="162"/>
    </location>
</feature>
<feature type="domain" description="PAC 1" evidence="3">
    <location>
        <begin position="163"/>
        <end position="217"/>
    </location>
</feature>
<feature type="domain" description="PAS 2" evidence="2">
    <location>
        <begin position="375"/>
        <end position="448"/>
    </location>
</feature>
<feature type="domain" description="PAC 2" evidence="3">
    <location>
        <begin position="449"/>
        <end position="503"/>
    </location>
</feature>
<feature type="domain" description="Protein kinase" evidence="4">
    <location>
        <begin position="576"/>
        <end position="863"/>
    </location>
</feature>
<feature type="region of interest" description="Disordered" evidence="6">
    <location>
        <begin position="28"/>
        <end position="84"/>
    </location>
</feature>
<feature type="region of interest" description="Disordered" evidence="6">
    <location>
        <begin position="332"/>
        <end position="363"/>
    </location>
</feature>
<feature type="compositionally biased region" description="Polar residues" evidence="6">
    <location>
        <begin position="41"/>
        <end position="51"/>
    </location>
</feature>
<feature type="active site" description="Proton acceptor" evidence="4 5">
    <location>
        <position position="701"/>
    </location>
</feature>
<feature type="binding site" evidence="1">
    <location>
        <begin position="138"/>
        <end position="143"/>
    </location>
    <ligand>
        <name>FMN</name>
        <dbReference type="ChEBI" id="CHEBI:58210"/>
    </ligand>
</feature>
<feature type="binding site" evidence="1">
    <location>
        <position position="156"/>
    </location>
    <ligand>
        <name>FMN</name>
        <dbReference type="ChEBI" id="CHEBI:58210"/>
    </ligand>
</feature>
<feature type="binding site" evidence="1">
    <location>
        <position position="171"/>
    </location>
    <ligand>
        <name>FMN</name>
        <dbReference type="ChEBI" id="CHEBI:58210"/>
    </ligand>
</feature>
<feature type="binding site" evidence="1">
    <location>
        <position position="181"/>
    </location>
    <ligand>
        <name>FMN</name>
        <dbReference type="ChEBI" id="CHEBI:58210"/>
    </ligand>
</feature>
<feature type="binding site" evidence="1">
    <location>
        <position position="202"/>
    </location>
    <ligand>
        <name>FMN</name>
        <dbReference type="ChEBI" id="CHEBI:58210"/>
    </ligand>
</feature>
<feature type="binding site" evidence="1">
    <location>
        <begin position="424"/>
        <end position="429"/>
    </location>
    <ligand>
        <name>FMN</name>
        <dbReference type="ChEBI" id="CHEBI:58210"/>
    </ligand>
</feature>
<feature type="binding site" evidence="1">
    <location>
        <position position="442"/>
    </location>
    <ligand>
        <name>FMN</name>
        <dbReference type="ChEBI" id="CHEBI:58210"/>
    </ligand>
</feature>
<feature type="binding site" evidence="1">
    <location>
        <position position="457"/>
    </location>
    <ligand>
        <name>FMN</name>
        <dbReference type="ChEBI" id="CHEBI:58210"/>
    </ligand>
</feature>
<feature type="binding site" evidence="1">
    <location>
        <position position="467"/>
    </location>
    <ligand>
        <name>FMN</name>
        <dbReference type="ChEBI" id="CHEBI:58210"/>
    </ligand>
</feature>
<feature type="binding site" evidence="1">
    <location>
        <position position="488"/>
    </location>
    <ligand>
        <name>FMN</name>
        <dbReference type="ChEBI" id="CHEBI:58210"/>
    </ligand>
</feature>
<feature type="binding site" evidence="4">
    <location>
        <begin position="582"/>
        <end position="590"/>
    </location>
    <ligand>
        <name>ATP</name>
        <dbReference type="ChEBI" id="CHEBI:30616"/>
    </ligand>
</feature>
<feature type="binding site" evidence="4">
    <location>
        <position position="605"/>
    </location>
    <ligand>
        <name>ATP</name>
        <dbReference type="ChEBI" id="CHEBI:30616"/>
    </ligand>
</feature>
<feature type="modified residue" description="S-4a-FMN cysteine" evidence="1">
    <location>
        <position position="139"/>
    </location>
</feature>
<feature type="modified residue" description="S-4a-FMN cysteine" evidence="1">
    <location>
        <position position="425"/>
    </location>
</feature>
<gene>
    <name type="primary">PHOT2</name>
    <name type="ordered locus">Os04g0304200</name>
    <name type="ordered locus">LOC_Os04g23890</name>
    <name type="ORF">OSJNBa0079M09.13</name>
</gene>
<comment type="function">
    <text evidence="1">Protein kinase that acts as a blue light photoreceptor in a signal-transduction pathway for phototropic responses. Regulates a wide range of physiological activities in plants that maximize the efficiency of photosynthesis, such as chloroplast relocations, stomata opening, and leaf expansion (By similarity).</text>
</comment>
<comment type="catalytic activity">
    <reaction>
        <text>L-seryl-[protein] + ATP = O-phospho-L-seryl-[protein] + ADP + H(+)</text>
        <dbReference type="Rhea" id="RHEA:17989"/>
        <dbReference type="Rhea" id="RHEA-COMP:9863"/>
        <dbReference type="Rhea" id="RHEA-COMP:11604"/>
        <dbReference type="ChEBI" id="CHEBI:15378"/>
        <dbReference type="ChEBI" id="CHEBI:29999"/>
        <dbReference type="ChEBI" id="CHEBI:30616"/>
        <dbReference type="ChEBI" id="CHEBI:83421"/>
        <dbReference type="ChEBI" id="CHEBI:456216"/>
        <dbReference type="EC" id="2.7.11.1"/>
    </reaction>
</comment>
<comment type="catalytic activity">
    <reaction>
        <text>L-threonyl-[protein] + ATP = O-phospho-L-threonyl-[protein] + ADP + H(+)</text>
        <dbReference type="Rhea" id="RHEA:46608"/>
        <dbReference type="Rhea" id="RHEA-COMP:11060"/>
        <dbReference type="Rhea" id="RHEA-COMP:11605"/>
        <dbReference type="ChEBI" id="CHEBI:15378"/>
        <dbReference type="ChEBI" id="CHEBI:30013"/>
        <dbReference type="ChEBI" id="CHEBI:30616"/>
        <dbReference type="ChEBI" id="CHEBI:61977"/>
        <dbReference type="ChEBI" id="CHEBI:456216"/>
        <dbReference type="EC" id="2.7.11.1"/>
    </reaction>
</comment>
<comment type="cofactor">
    <cofactor evidence="1">
        <name>FMN</name>
        <dbReference type="ChEBI" id="CHEBI:58210"/>
    </cofactor>
    <text evidence="1">Binds 2 FMN per subunit.</text>
</comment>
<comment type="biophysicochemical properties">
    <absorption>
        <max evidence="8">450 nm</max>
        <text>Exhibits a smaller absorbance peak at 350 nm. The broad fluorescence emission spectrum peaks at 490 nm.</text>
    </absorption>
</comment>
<comment type="subunit">
    <text evidence="1">Homodimer.</text>
</comment>
<comment type="tissue specificity">
    <text evidence="7">Expressed at low levels in leaves of dark-grown seedlings.</text>
</comment>
<comment type="induction">
    <text evidence="7">By white light in dark-grown seedlings.</text>
</comment>
<comment type="domain">
    <text evidence="1">The PAS (PER-ARNT-SIM) domains are required for the binding of FMN chromophores.</text>
</comment>
<comment type="PTM">
    <text evidence="1">Autophosphorylated in response to blue light irradiation.</text>
</comment>
<comment type="PTM">
    <text evidence="1">2 molecules of FMN bind covalently to cysteines after exposure to blue light and are reversed in the dark.</text>
</comment>
<comment type="miscellaneous">
    <text>Undergoes a photocycle characterized by fluorescence and absorption changes induced by blue light.</text>
</comment>
<comment type="similarity">
    <text evidence="4">Belongs to the protein kinase superfamily. Ser/Thr protein kinase family.</text>
</comment>
<comment type="sequence caution" evidence="9">
    <conflict type="erroneous gene model prediction">
        <sequence resource="EMBL-CDS" id="BAF14329"/>
    </conflict>
</comment>
<proteinExistence type="evidence at protein level"/>
<evidence type="ECO:0000250" key="1"/>
<evidence type="ECO:0000255" key="2">
    <source>
        <dbReference type="PROSITE-ProRule" id="PRU00140"/>
    </source>
</evidence>
<evidence type="ECO:0000255" key="3">
    <source>
        <dbReference type="PROSITE-ProRule" id="PRU00141"/>
    </source>
</evidence>
<evidence type="ECO:0000255" key="4">
    <source>
        <dbReference type="PROSITE-ProRule" id="PRU00159"/>
    </source>
</evidence>
<evidence type="ECO:0000255" key="5">
    <source>
        <dbReference type="PROSITE-ProRule" id="PRU10027"/>
    </source>
</evidence>
<evidence type="ECO:0000256" key="6">
    <source>
        <dbReference type="SAM" id="MobiDB-lite"/>
    </source>
</evidence>
<evidence type="ECO:0000269" key="7">
    <source>
    </source>
</evidence>
<evidence type="ECO:0000269" key="8">
    <source>
    </source>
</evidence>
<evidence type="ECO:0000305" key="9"/>
<reference key="1">
    <citation type="journal article" date="2000" name="Plant Cell Physiol.">
        <title>Rice NPH1 homologues, OsNPH1a and OsNPH1b, are differently photoregulated.</title>
        <authorList>
            <person name="Kanegae H."/>
            <person name="Tahir M."/>
            <person name="Savazzini F."/>
            <person name="Yamamoto K."/>
            <person name="Yano M."/>
            <person name="Sasaki T."/>
            <person name="Kanegae T."/>
            <person name="Wada M."/>
            <person name="Takano M."/>
        </authorList>
    </citation>
    <scope>NUCLEOTIDE SEQUENCE [MRNA]</scope>
    <scope>TISSUE SPECIFICITY</scope>
    <scope>INDUCTION</scope>
    <source>
        <strain>cv. Nohrin 8</strain>
    </source>
</reference>
<reference key="2">
    <citation type="journal article" date="2002" name="Nature">
        <title>Sequence and analysis of rice chromosome 4.</title>
        <authorList>
            <person name="Feng Q."/>
            <person name="Zhang Y."/>
            <person name="Hao P."/>
            <person name="Wang S."/>
            <person name="Fu G."/>
            <person name="Huang Y."/>
            <person name="Li Y."/>
            <person name="Zhu J."/>
            <person name="Liu Y."/>
            <person name="Hu X."/>
            <person name="Jia P."/>
            <person name="Zhang Y."/>
            <person name="Zhao Q."/>
            <person name="Ying K."/>
            <person name="Yu S."/>
            <person name="Tang Y."/>
            <person name="Weng Q."/>
            <person name="Zhang L."/>
            <person name="Lu Y."/>
            <person name="Mu J."/>
            <person name="Lu Y."/>
            <person name="Zhang L.S."/>
            <person name="Yu Z."/>
            <person name="Fan D."/>
            <person name="Liu X."/>
            <person name="Lu T."/>
            <person name="Li C."/>
            <person name="Wu Y."/>
            <person name="Sun T."/>
            <person name="Lei H."/>
            <person name="Li T."/>
            <person name="Hu H."/>
            <person name="Guan J."/>
            <person name="Wu M."/>
            <person name="Zhang R."/>
            <person name="Zhou B."/>
            <person name="Chen Z."/>
            <person name="Chen L."/>
            <person name="Jin Z."/>
            <person name="Wang R."/>
            <person name="Yin H."/>
            <person name="Cai Z."/>
            <person name="Ren S."/>
            <person name="Lv G."/>
            <person name="Gu W."/>
            <person name="Zhu G."/>
            <person name="Tu Y."/>
            <person name="Jia J."/>
            <person name="Zhang Y."/>
            <person name="Chen J."/>
            <person name="Kang H."/>
            <person name="Chen X."/>
            <person name="Shao C."/>
            <person name="Sun Y."/>
            <person name="Hu Q."/>
            <person name="Zhang X."/>
            <person name="Zhang W."/>
            <person name="Wang L."/>
            <person name="Ding C."/>
            <person name="Sheng H."/>
            <person name="Gu J."/>
            <person name="Chen S."/>
            <person name="Ni L."/>
            <person name="Zhu F."/>
            <person name="Chen W."/>
            <person name="Lan L."/>
            <person name="Lai Y."/>
            <person name="Cheng Z."/>
            <person name="Gu M."/>
            <person name="Jiang J."/>
            <person name="Li J."/>
            <person name="Hong G."/>
            <person name="Xue Y."/>
            <person name="Han B."/>
        </authorList>
    </citation>
    <scope>NUCLEOTIDE SEQUENCE [LARGE SCALE GENOMIC DNA]</scope>
    <source>
        <strain>cv. Nipponbare</strain>
    </source>
</reference>
<reference key="3">
    <citation type="journal article" date="2005" name="Nature">
        <title>The map-based sequence of the rice genome.</title>
        <authorList>
            <consortium name="International rice genome sequencing project (IRGSP)"/>
        </authorList>
    </citation>
    <scope>NUCLEOTIDE SEQUENCE [LARGE SCALE GENOMIC DNA]</scope>
    <source>
        <strain>cv. Nipponbare</strain>
    </source>
</reference>
<reference key="4">
    <citation type="journal article" date="2008" name="Nucleic Acids Res.">
        <title>The rice annotation project database (RAP-DB): 2008 update.</title>
        <authorList>
            <consortium name="The rice annotation project (RAP)"/>
        </authorList>
    </citation>
    <scope>GENOME REANNOTATION</scope>
    <source>
        <strain>cv. Nipponbare</strain>
    </source>
</reference>
<reference key="5">
    <citation type="journal article" date="2013" name="Rice">
        <title>Improvement of the Oryza sativa Nipponbare reference genome using next generation sequence and optical map data.</title>
        <authorList>
            <person name="Kawahara Y."/>
            <person name="de la Bastide M."/>
            <person name="Hamilton J.P."/>
            <person name="Kanamori H."/>
            <person name="McCombie W.R."/>
            <person name="Ouyang S."/>
            <person name="Schwartz D.C."/>
            <person name="Tanaka T."/>
            <person name="Wu J."/>
            <person name="Zhou S."/>
            <person name="Childs K.L."/>
            <person name="Davidson R.M."/>
            <person name="Lin H."/>
            <person name="Quesada-Ocampo L."/>
            <person name="Vaillancourt B."/>
            <person name="Sakai H."/>
            <person name="Lee S.S."/>
            <person name="Kim J."/>
            <person name="Numa H."/>
            <person name="Itoh T."/>
            <person name="Buell C.R."/>
            <person name="Matsumoto T."/>
        </authorList>
    </citation>
    <scope>GENOME REANNOTATION</scope>
    <source>
        <strain>cv. Nipponbare</strain>
    </source>
</reference>
<reference key="6">
    <citation type="journal article" date="2002" name="Plant Physiol.">
        <title>Photochemical properties of the flavin mononucleotide-binding domains of the phototropins from Arabidopsis, rice, and Chlamydomonas reinhardtii.</title>
        <authorList>
            <person name="Kasahara M."/>
            <person name="Swartz T.E."/>
            <person name="Olney M.A."/>
            <person name="Onodera A."/>
            <person name="Mochizuki N."/>
            <person name="Fukuzawa H."/>
            <person name="Asamizu E."/>
            <person name="Tabata S."/>
            <person name="Kanegae H."/>
            <person name="Takano M."/>
            <person name="Christie J.M."/>
            <person name="Nagatani A."/>
            <person name="Briggs W.R."/>
        </authorList>
    </citation>
    <scope>BIOPHYSICOCHEMICAL PROPERTIES</scope>
</reference>
<sequence>MAGSSSSKEIVDAVEKWMAFPTSGGGGATAGLEIVAEDAPSGSSGAHQQQAWRPVAPATAGRDSGGTGSGKSSVDGGVGRASHDSLPRVSQELKDALSSLQQTFVVSDATRPDCPIIYASEGFFTMTGYSPREVVGRNCRFLQGPDTDAAEVAKIRDAVKHGRSFCGRLLNYRKDGAPFWNLLTVTPIRDDNGKVIKFIGMQVEVSKYTEGLSDKRMRPNELPVSLIRYDERQKDKAMSSMTEVVQTVKQPRGARAPADAALLTPPKMSDADKMAAMSPVVAPGTPSGGGGGAGSFKSPLWDLKKEESRLSRLASGRKSGRSSLMGFKIGKRSSVGSREAPAVVEEPAPAPPPAPEVVERTDSWERAEREKDIRQGIDLATTLERIEKNFVITDPRIPDNPIIFASDSFLELTEYTREEILGRNCRFLQGPETDQGTVDKIREAIREQKEITVQLINYTKSGKKFWNLFHLQPMRDQKGELQYFIGVQLDGSDHVEPLRNRLSENTEIQSAKLVKATAENVDDAVRELPDANLRPEDLWAIHSMRVSPKPHKRNNPSWIAIEKATNLGEKIGLKHFKPVKPLGCGDTGSVHLVELQGSGELFAMKAMDKSVMLNRNKVHRACIEREIYALLDHPFLPTLYTSFQTPTHVCLITDFCPGGELFAVLDRQPMKIFREECARFYAAEVVIGLEYLHCLGIIYRDLKPENILLQADGHIVLTDFDLSFLTTSKPHVIKNSTSLKRRRSQEFLPPTFVSEPSTPSNSFVGTEEYIAPEVITGAGHTSAIDWWALGILLYEMLYGRTPFRGKNRKKTFYNILHKDLTFPSSIPVSLAAKQLIHGLLQRDPSNRIGSNAGANDIKQHSFFQDINWPLIRCMSPPELDVPLKLIGKETQPKAKPDEDVPLNLDTF</sequence>
<accession>Q9ST27</accession>
<accession>Q0JEA8</accession>
<accession>Q7XVR1</accession>